<proteinExistence type="predicted"/>
<gene>
    <name type="ordered locus">TP_0747</name>
</gene>
<feature type="chain" id="PRO_0000202313" description="Uncharacterized protein TP_0747">
    <location>
        <begin position="1"/>
        <end position="344"/>
    </location>
</feature>
<feature type="region of interest" description="Disordered" evidence="1">
    <location>
        <begin position="190"/>
        <end position="232"/>
    </location>
</feature>
<reference key="1">
    <citation type="journal article" date="1998" name="Science">
        <title>Complete genome sequence of Treponema pallidum, the syphilis spirochete.</title>
        <authorList>
            <person name="Fraser C.M."/>
            <person name="Norris S.J."/>
            <person name="Weinstock G.M."/>
            <person name="White O."/>
            <person name="Sutton G.G."/>
            <person name="Dodson R.J."/>
            <person name="Gwinn M.L."/>
            <person name="Hickey E.K."/>
            <person name="Clayton R.A."/>
            <person name="Ketchum K.A."/>
            <person name="Sodergren E."/>
            <person name="Hardham J.M."/>
            <person name="McLeod M.P."/>
            <person name="Salzberg S.L."/>
            <person name="Peterson J.D."/>
            <person name="Khalak H.G."/>
            <person name="Richardson D.L."/>
            <person name="Howell J.K."/>
            <person name="Chidambaram M."/>
            <person name="Utterback T.R."/>
            <person name="McDonald L.A."/>
            <person name="Artiach P."/>
            <person name="Bowman C."/>
            <person name="Cotton M.D."/>
            <person name="Fujii C."/>
            <person name="Garland S.A."/>
            <person name="Hatch B."/>
            <person name="Horst K."/>
            <person name="Roberts K.M."/>
            <person name="Sandusky M."/>
            <person name="Weidman J.F."/>
            <person name="Smith H.O."/>
            <person name="Venter J.C."/>
        </authorList>
    </citation>
    <scope>NUCLEOTIDE SEQUENCE [LARGE SCALE GENOMIC DNA]</scope>
    <source>
        <strain>Nichols</strain>
    </source>
</reference>
<sequence length="344" mass="37779">MVSASSFYVPAAVKKNFNALVRHVKGVLSVLDECDPKNNVADQVNLLLCAKEMQSEQVAALLSVLLIDTWGYRLFSYNLRKVSVEGLGFAQETARWKGVDIVLGYHHPDLGFLAINPKNPSNASLVEGFRKNELLLVYVGKQDRGPLDERIADEVAKGLIALIENRKFVVPKEILSGVFAFVSTKKSEGSGKRVRSAKKSGADAARASEGATCDRASSESVSPTARPPAQASAGPIRMSQLISVPVSNELFHNGNVEAWKRIIRSYNARYPSSEVIVFYDGERIVDINTLFKWGKVKHGSVIQFAVSGEEIKDLSKLSKYFKEGASSRFEVFLHGSPDTVLNLF</sequence>
<protein>
    <recommendedName>
        <fullName>Uncharacterized protein TP_0747</fullName>
    </recommendedName>
</protein>
<name>Y747_TREPA</name>
<organism>
    <name type="scientific">Treponema pallidum (strain Nichols)</name>
    <dbReference type="NCBI Taxonomy" id="243276"/>
    <lineage>
        <taxon>Bacteria</taxon>
        <taxon>Pseudomonadati</taxon>
        <taxon>Spirochaetota</taxon>
        <taxon>Spirochaetia</taxon>
        <taxon>Spirochaetales</taxon>
        <taxon>Treponemataceae</taxon>
        <taxon>Treponema</taxon>
    </lineage>
</organism>
<dbReference type="EMBL" id="AE000520">
    <property type="protein sequence ID" value="AAC65718.1"/>
    <property type="molecule type" value="Genomic_DNA"/>
</dbReference>
<dbReference type="PIR" id="H71286">
    <property type="entry name" value="H71286"/>
</dbReference>
<dbReference type="RefSeq" id="WP_010882192.1">
    <property type="nucleotide sequence ID" value="NC_021490.2"/>
</dbReference>
<dbReference type="SMR" id="O83729"/>
<dbReference type="IntAct" id="O83729">
    <property type="interactions" value="5"/>
</dbReference>
<dbReference type="STRING" id="243276.TP_0747"/>
<dbReference type="EnsemblBacteria" id="AAC65718">
    <property type="protein sequence ID" value="AAC65718"/>
    <property type="gene ID" value="TP_0747"/>
</dbReference>
<dbReference type="KEGG" id="tpa:TP_0747"/>
<dbReference type="KEGG" id="tpw:TPANIC_0747"/>
<dbReference type="eggNOG" id="ENOG5033THS">
    <property type="taxonomic scope" value="Bacteria"/>
</dbReference>
<dbReference type="HOGENOM" id="CLU_813628_0_0_12"/>
<dbReference type="OrthoDB" id="357189at2"/>
<dbReference type="Proteomes" id="UP000000811">
    <property type="component" value="Chromosome"/>
</dbReference>
<accession>O83729</accession>
<keyword id="KW-1185">Reference proteome</keyword>
<evidence type="ECO:0000256" key="1">
    <source>
        <dbReference type="SAM" id="MobiDB-lite"/>
    </source>
</evidence>